<dbReference type="EMBL" id="AB002583">
    <property type="protein sequence ID" value="BAC76203.1"/>
    <property type="molecule type" value="Genomic_DNA"/>
</dbReference>
<dbReference type="RefSeq" id="NP_849041.1">
    <property type="nucleotide sequence ID" value="NC_004799.1"/>
</dbReference>
<dbReference type="SMR" id="Q85FZ0"/>
<dbReference type="STRING" id="280699.Q85FZ0"/>
<dbReference type="EnsemblPlants" id="CMV132CT">
    <property type="protein sequence ID" value="CMV132CT"/>
    <property type="gene ID" value="CMV132C"/>
</dbReference>
<dbReference type="GeneID" id="845161"/>
<dbReference type="Gramene" id="CMV132CT">
    <property type="protein sequence ID" value="CMV132CT"/>
    <property type="gene ID" value="CMV132C"/>
</dbReference>
<dbReference type="KEGG" id="cme:CymeCp109"/>
<dbReference type="eggNOG" id="KOG1748">
    <property type="taxonomic scope" value="Eukaryota"/>
</dbReference>
<dbReference type="HOGENOM" id="CLU_108696_5_1_1"/>
<dbReference type="UniPathway" id="UPA00094"/>
<dbReference type="Proteomes" id="UP000007014">
    <property type="component" value="Chloroplast"/>
</dbReference>
<dbReference type="GO" id="GO:0009507">
    <property type="term" value="C:chloroplast"/>
    <property type="evidence" value="ECO:0007669"/>
    <property type="project" value="UniProtKB-SubCell"/>
</dbReference>
<dbReference type="GO" id="GO:0005829">
    <property type="term" value="C:cytosol"/>
    <property type="evidence" value="ECO:0007669"/>
    <property type="project" value="TreeGrafter"/>
</dbReference>
<dbReference type="GO" id="GO:0016020">
    <property type="term" value="C:membrane"/>
    <property type="evidence" value="ECO:0007669"/>
    <property type="project" value="GOC"/>
</dbReference>
<dbReference type="GO" id="GO:0000035">
    <property type="term" value="F:acyl binding"/>
    <property type="evidence" value="ECO:0007669"/>
    <property type="project" value="TreeGrafter"/>
</dbReference>
<dbReference type="GO" id="GO:0000036">
    <property type="term" value="F:acyl carrier activity"/>
    <property type="evidence" value="ECO:0007669"/>
    <property type="project" value="UniProtKB-UniRule"/>
</dbReference>
<dbReference type="GO" id="GO:0009245">
    <property type="term" value="P:lipid A biosynthetic process"/>
    <property type="evidence" value="ECO:0007669"/>
    <property type="project" value="TreeGrafter"/>
</dbReference>
<dbReference type="FunFam" id="1.10.1200.10:FF:000001">
    <property type="entry name" value="Acyl carrier protein"/>
    <property type="match status" value="1"/>
</dbReference>
<dbReference type="Gene3D" id="1.10.1200.10">
    <property type="entry name" value="ACP-like"/>
    <property type="match status" value="1"/>
</dbReference>
<dbReference type="HAMAP" id="MF_01217">
    <property type="entry name" value="Acyl_carrier"/>
    <property type="match status" value="1"/>
</dbReference>
<dbReference type="InterPro" id="IPR003231">
    <property type="entry name" value="ACP"/>
</dbReference>
<dbReference type="InterPro" id="IPR036736">
    <property type="entry name" value="ACP-like_sf"/>
</dbReference>
<dbReference type="InterPro" id="IPR009081">
    <property type="entry name" value="PP-bd_ACP"/>
</dbReference>
<dbReference type="NCBIfam" id="TIGR00517">
    <property type="entry name" value="acyl_carrier"/>
    <property type="match status" value="1"/>
</dbReference>
<dbReference type="NCBIfam" id="NF002148">
    <property type="entry name" value="PRK00982.1-2"/>
    <property type="match status" value="1"/>
</dbReference>
<dbReference type="NCBIfam" id="NF002149">
    <property type="entry name" value="PRK00982.1-3"/>
    <property type="match status" value="1"/>
</dbReference>
<dbReference type="NCBIfam" id="NF002150">
    <property type="entry name" value="PRK00982.1-4"/>
    <property type="match status" value="1"/>
</dbReference>
<dbReference type="NCBIfam" id="NF002151">
    <property type="entry name" value="PRK00982.1-5"/>
    <property type="match status" value="1"/>
</dbReference>
<dbReference type="PANTHER" id="PTHR20863">
    <property type="entry name" value="ACYL CARRIER PROTEIN"/>
    <property type="match status" value="1"/>
</dbReference>
<dbReference type="PANTHER" id="PTHR20863:SF76">
    <property type="entry name" value="CARRIER DOMAIN-CONTAINING PROTEIN"/>
    <property type="match status" value="1"/>
</dbReference>
<dbReference type="Pfam" id="PF00550">
    <property type="entry name" value="PP-binding"/>
    <property type="match status" value="1"/>
</dbReference>
<dbReference type="SUPFAM" id="SSF47336">
    <property type="entry name" value="ACP-like"/>
    <property type="match status" value="1"/>
</dbReference>
<dbReference type="PROSITE" id="PS50075">
    <property type="entry name" value="CARRIER"/>
    <property type="match status" value="1"/>
</dbReference>
<sequence length="91" mass="10161">MTEQQILDKVQSIVSEQLGVERSQISPNASFTHDLGADSLDNVELVMAMEEEFDLEIPDSAAEQITTIQQAVDYILQHKKSLSQNNLSQNN</sequence>
<protein>
    <recommendedName>
        <fullName evidence="1">Acyl carrier protein</fullName>
        <shortName evidence="1">ACP</shortName>
    </recommendedName>
</protein>
<geneLocation type="chloroplast"/>
<reference key="1">
    <citation type="journal article" date="2003" name="DNA Res.">
        <title>Complete sequence and analysis of the plastid genome of the unicellular red alga Cyanidioschyzon merolae.</title>
        <authorList>
            <person name="Ohta N."/>
            <person name="Matsuzaki M."/>
            <person name="Misumi O."/>
            <person name="Miyagishima S.-Y."/>
            <person name="Nozaki H."/>
            <person name="Tanaka K."/>
            <person name="Shin-i T."/>
            <person name="Kohara Y."/>
            <person name="Kuroiwa T."/>
        </authorList>
    </citation>
    <scope>NUCLEOTIDE SEQUENCE [LARGE SCALE GENOMIC DNA]</scope>
    <source>
        <strain>NIES-3377 / 10D</strain>
    </source>
</reference>
<comment type="function">
    <text evidence="1">Carrier of the growing fatty acid chain in fatty acid biosynthesis.</text>
</comment>
<comment type="pathway">
    <text evidence="1">Lipid metabolism; fatty acid biosynthesis.</text>
</comment>
<comment type="subcellular location">
    <subcellularLocation>
        <location>Plastid</location>
        <location>Chloroplast</location>
    </subcellularLocation>
</comment>
<comment type="PTM">
    <text evidence="1">4'-phosphopantetheine is transferred from CoA to a specific serine of apo-ACP by AcpS. This modification is essential for activity because fatty acids are bound in thioester linkage to the sulfhydryl of the prosthetic group.</text>
</comment>
<comment type="similarity">
    <text evidence="1">Belongs to the acyl carrier protein (ACP) family.</text>
</comment>
<feature type="chain" id="PRO_0000180230" description="Acyl carrier protein">
    <location>
        <begin position="1"/>
        <end position="91"/>
    </location>
</feature>
<feature type="domain" description="Carrier" evidence="2">
    <location>
        <begin position="4"/>
        <end position="79"/>
    </location>
</feature>
<feature type="modified residue" description="O-(pantetheine 4'-phosphoryl)serine" evidence="2">
    <location>
        <position position="39"/>
    </location>
</feature>
<name>ACP_CYAM1</name>
<gene>
    <name evidence="1" type="primary">acpP</name>
</gene>
<proteinExistence type="inferred from homology"/>
<keyword id="KW-0150">Chloroplast</keyword>
<keyword id="KW-0275">Fatty acid biosynthesis</keyword>
<keyword id="KW-0276">Fatty acid metabolism</keyword>
<keyword id="KW-0444">Lipid biosynthesis</keyword>
<keyword id="KW-0443">Lipid metabolism</keyword>
<keyword id="KW-0596">Phosphopantetheine</keyword>
<keyword id="KW-0597">Phosphoprotein</keyword>
<keyword id="KW-0934">Plastid</keyword>
<keyword id="KW-1185">Reference proteome</keyword>
<organism>
    <name type="scientific">Cyanidioschyzon merolae (strain NIES-3377 / 10D)</name>
    <name type="common">Unicellular red alga</name>
    <dbReference type="NCBI Taxonomy" id="280699"/>
    <lineage>
        <taxon>Eukaryota</taxon>
        <taxon>Rhodophyta</taxon>
        <taxon>Bangiophyceae</taxon>
        <taxon>Cyanidiales</taxon>
        <taxon>Cyanidiaceae</taxon>
        <taxon>Cyanidioschyzon</taxon>
    </lineage>
</organism>
<accession>Q85FZ0</accession>
<evidence type="ECO:0000255" key="1">
    <source>
        <dbReference type="HAMAP-Rule" id="MF_01217"/>
    </source>
</evidence>
<evidence type="ECO:0000255" key="2">
    <source>
        <dbReference type="PROSITE-ProRule" id="PRU00258"/>
    </source>
</evidence>